<proteinExistence type="inferred from homology"/>
<sequence length="719" mass="80493">MLFGFFRNLFRVLYRVRVTGDVRALQGNRVLITPNHVSFIDGMLLALFLPVRPVFAVYTSISQQWYMRWLTPLIDFVPLDPTKPMSIKHLVRLVEQGRPVVIFPEGRISVTGSLMKIYDGAGFVAAKSGATVIPLRIDGAELTPFSRLKGLVKRRLFPRIQLHILPPTQIPMPEAPRARDRRKIAGEMLHQIMMEARMAVRPRETLYESLLAAQYRYGAGKNCIEDINFTPDTYRKLLTKTLFVGRILEKYSVEGEKIGLMLPNAAISAAVIFGAVSRRRIPAMMNYTAGVKGLTSAITAAEIKTIFTSRQFLDKGKLWHLPEQLTQVRWVYLEDLKADVTPADKLWIFAHLLAPRLAQVKQQPEDAAIILFTSGSEGHPKGVVHSHKSILANVEQIKTIADFTANDRFMSALPLFHSFGLTVGLFTPLLTGAEVFLYPSPLHYRIVPELVYDRNCTVLFGTSTFLGNYARFANPYDFYRLRYVVAGAEKLQESTKQLWQDKFGLRILEGYGVTECAPVVSINVPMAAKPGTVGRILPGMDARLLAVPGIENGGRLQLKGPNIMNGYLRVEKPGVLEVPSAENARGETERGWYDTGDIVRFDENGFVQIQGRAKRFAKIAGEMVSLEMVEQLALGVSADKMHATAIKSDASKGEALVLFTTDSELTREKLQHYAREHGIPELAVPRDIRYLKQLPLLGSGKPDFVTLKSWVDAPEQHHE</sequence>
<protein>
    <recommendedName>
        <fullName evidence="1">Bifunctional protein Aas</fullName>
    </recommendedName>
    <domain>
        <recommendedName>
            <fullName evidence="1">2-acylglycerophosphoethanolamine acyltransferase</fullName>
            <ecNumber evidence="1">2.3.1.40</ecNumber>
        </recommendedName>
        <alternativeName>
            <fullName evidence="1">2-acyl-GPE acyltransferase</fullName>
        </alternativeName>
        <alternativeName>
            <fullName evidence="1">Acyl-[acyl-carrier-protein]--phospholipid O-acyltransferase</fullName>
        </alternativeName>
    </domain>
    <domain>
        <recommendedName>
            <fullName evidence="1">Acyl-[acyl-carrier-protein] synthetase</fullName>
            <ecNumber evidence="1">6.2.1.20</ecNumber>
        </recommendedName>
        <alternativeName>
            <fullName evidence="1">Acyl-ACP synthetase</fullName>
        </alternativeName>
        <alternativeName>
            <fullName evidence="1">Long-chain-fatty-acid--[acyl-carrier-protein] ligase</fullName>
        </alternativeName>
    </domain>
</protein>
<organism>
    <name type="scientific">Salmonella heidelberg (strain SL476)</name>
    <dbReference type="NCBI Taxonomy" id="454169"/>
    <lineage>
        <taxon>Bacteria</taxon>
        <taxon>Pseudomonadati</taxon>
        <taxon>Pseudomonadota</taxon>
        <taxon>Gammaproteobacteria</taxon>
        <taxon>Enterobacterales</taxon>
        <taxon>Enterobacteriaceae</taxon>
        <taxon>Salmonella</taxon>
    </lineage>
</organism>
<gene>
    <name evidence="1" type="primary">aas</name>
    <name type="ordered locus">SeHA_C3223</name>
</gene>
<reference key="1">
    <citation type="journal article" date="2011" name="J. Bacteriol.">
        <title>Comparative genomics of 28 Salmonella enterica isolates: evidence for CRISPR-mediated adaptive sublineage evolution.</title>
        <authorList>
            <person name="Fricke W.F."/>
            <person name="Mammel M.K."/>
            <person name="McDermott P.F."/>
            <person name="Tartera C."/>
            <person name="White D.G."/>
            <person name="Leclerc J.E."/>
            <person name="Ravel J."/>
            <person name="Cebula T.A."/>
        </authorList>
    </citation>
    <scope>NUCLEOTIDE SEQUENCE [LARGE SCALE GENOMIC DNA]</scope>
    <source>
        <strain>SL476</strain>
    </source>
</reference>
<keyword id="KW-0012">Acyltransferase</keyword>
<keyword id="KW-0067">ATP-binding</keyword>
<keyword id="KW-0997">Cell inner membrane</keyword>
<keyword id="KW-1003">Cell membrane</keyword>
<keyword id="KW-0436">Ligase</keyword>
<keyword id="KW-0472">Membrane</keyword>
<keyword id="KW-0511">Multifunctional enzyme</keyword>
<keyword id="KW-0547">Nucleotide-binding</keyword>
<keyword id="KW-0808">Transferase</keyword>
<keyword id="KW-0812">Transmembrane</keyword>
<keyword id="KW-1133">Transmembrane helix</keyword>
<comment type="function">
    <text evidence="1">Plays a role in lysophospholipid acylation. Transfers fatty acids to the 1-position via an enzyme-bound acyl-ACP intermediate in the presence of ATP and magnesium. Its physiological function is to regenerate phosphatidylethanolamine from 2-acyl-glycero-3-phosphoethanolamine (2-acyl-GPE) formed by transacylation reactions or degradation by phospholipase A1.</text>
</comment>
<comment type="catalytic activity">
    <reaction evidence="1">
        <text>a 2-acyl-sn-glycero-3-phosphoethanolamine + a fatty acyl-[ACP] = a 1,2-diacyl-sn-glycero-3-phosphoethanolamine + holo-[ACP]</text>
        <dbReference type="Rhea" id="RHEA:10304"/>
        <dbReference type="Rhea" id="RHEA-COMP:9685"/>
        <dbReference type="Rhea" id="RHEA-COMP:14125"/>
        <dbReference type="ChEBI" id="CHEBI:64479"/>
        <dbReference type="ChEBI" id="CHEBI:64612"/>
        <dbReference type="ChEBI" id="CHEBI:65213"/>
        <dbReference type="ChEBI" id="CHEBI:138651"/>
        <dbReference type="EC" id="2.3.1.40"/>
    </reaction>
</comment>
<comment type="catalytic activity">
    <reaction evidence="1">
        <text>a long-chain fatty acid + holo-[ACP] + ATP = a long-chain fatty acyl-[ACP] + AMP + diphosphate</text>
        <dbReference type="Rhea" id="RHEA:45588"/>
        <dbReference type="Rhea" id="RHEA-COMP:9685"/>
        <dbReference type="Rhea" id="RHEA-COMP:12682"/>
        <dbReference type="ChEBI" id="CHEBI:30616"/>
        <dbReference type="ChEBI" id="CHEBI:33019"/>
        <dbReference type="ChEBI" id="CHEBI:57560"/>
        <dbReference type="ChEBI" id="CHEBI:64479"/>
        <dbReference type="ChEBI" id="CHEBI:133243"/>
        <dbReference type="ChEBI" id="CHEBI:456215"/>
        <dbReference type="EC" id="6.2.1.20"/>
    </reaction>
</comment>
<comment type="subcellular location">
    <subcellularLocation>
        <location evidence="1">Cell inner membrane</location>
        <topology evidence="1">Multi-pass membrane protein</topology>
    </subcellularLocation>
</comment>
<comment type="similarity">
    <text evidence="1">In the N-terminal section; belongs to the 2-acyl-GPE acetyltransferase family.</text>
</comment>
<comment type="similarity">
    <text evidence="1">In the C-terminal section; belongs to the ATP-dependent AMP-binding enzyme family.</text>
</comment>
<evidence type="ECO:0000255" key="1">
    <source>
        <dbReference type="HAMAP-Rule" id="MF_01162"/>
    </source>
</evidence>
<name>AAS_SALHS</name>
<feature type="chain" id="PRO_1000137899" description="Bifunctional protein Aas">
    <location>
        <begin position="1"/>
        <end position="719"/>
    </location>
</feature>
<feature type="transmembrane region" description="Helical" evidence="1">
    <location>
        <begin position="258"/>
        <end position="277"/>
    </location>
</feature>
<feature type="transmembrane region" description="Helical" evidence="1">
    <location>
        <begin position="409"/>
        <end position="433"/>
    </location>
</feature>
<feature type="region of interest" description="Acyltransferase">
    <location>
        <begin position="15"/>
        <end position="138"/>
    </location>
</feature>
<feature type="region of interest" description="AMP-binding">
    <location>
        <begin position="233"/>
        <end position="646"/>
    </location>
</feature>
<feature type="active site" evidence="1">
    <location>
        <position position="36"/>
    </location>
</feature>
<dbReference type="EC" id="2.3.1.40" evidence="1"/>
<dbReference type="EC" id="6.2.1.20" evidence="1"/>
<dbReference type="EMBL" id="CP001120">
    <property type="protein sequence ID" value="ACF66088.1"/>
    <property type="molecule type" value="Genomic_DNA"/>
</dbReference>
<dbReference type="RefSeq" id="WP_000896101.1">
    <property type="nucleotide sequence ID" value="NC_011083.1"/>
</dbReference>
<dbReference type="SMR" id="B4TGR5"/>
<dbReference type="KEGG" id="seh:SeHA_C3223"/>
<dbReference type="HOGENOM" id="CLU_000022_59_8_6"/>
<dbReference type="Proteomes" id="UP000001866">
    <property type="component" value="Chromosome"/>
</dbReference>
<dbReference type="GO" id="GO:0005886">
    <property type="term" value="C:plasma membrane"/>
    <property type="evidence" value="ECO:0007669"/>
    <property type="project" value="UniProtKB-SubCell"/>
</dbReference>
<dbReference type="GO" id="GO:0008779">
    <property type="term" value="F:acyl-[acyl-carrier-protein]-phospholipid O-acyltransferase activity"/>
    <property type="evidence" value="ECO:0007669"/>
    <property type="project" value="UniProtKB-UniRule"/>
</dbReference>
<dbReference type="GO" id="GO:0005524">
    <property type="term" value="F:ATP binding"/>
    <property type="evidence" value="ECO:0007669"/>
    <property type="project" value="UniProtKB-KW"/>
</dbReference>
<dbReference type="GO" id="GO:0008922">
    <property type="term" value="F:long-chain fatty acid [acyl-carrier-protein] ligase activity"/>
    <property type="evidence" value="ECO:0007669"/>
    <property type="project" value="UniProtKB-UniRule"/>
</dbReference>
<dbReference type="GO" id="GO:0031956">
    <property type="term" value="F:medium-chain fatty acid-CoA ligase activity"/>
    <property type="evidence" value="ECO:0007669"/>
    <property type="project" value="TreeGrafter"/>
</dbReference>
<dbReference type="GO" id="GO:0006631">
    <property type="term" value="P:fatty acid metabolic process"/>
    <property type="evidence" value="ECO:0007669"/>
    <property type="project" value="InterPro"/>
</dbReference>
<dbReference type="GO" id="GO:0008654">
    <property type="term" value="P:phospholipid biosynthetic process"/>
    <property type="evidence" value="ECO:0007669"/>
    <property type="project" value="InterPro"/>
</dbReference>
<dbReference type="CDD" id="cd05909">
    <property type="entry name" value="AAS_C"/>
    <property type="match status" value="1"/>
</dbReference>
<dbReference type="CDD" id="cd07989">
    <property type="entry name" value="LPLAT_AGPAT-like"/>
    <property type="match status" value="1"/>
</dbReference>
<dbReference type="FunFam" id="3.30.300.30:FF:000009">
    <property type="entry name" value="Bifunctional protein Aas"/>
    <property type="match status" value="1"/>
</dbReference>
<dbReference type="FunFam" id="3.40.50.12780:FF:000009">
    <property type="entry name" value="Bifunctional protein Aas"/>
    <property type="match status" value="1"/>
</dbReference>
<dbReference type="Gene3D" id="3.30.300.30">
    <property type="match status" value="1"/>
</dbReference>
<dbReference type="Gene3D" id="3.40.50.12780">
    <property type="entry name" value="N-terminal domain of ligase-like"/>
    <property type="match status" value="1"/>
</dbReference>
<dbReference type="HAMAP" id="MF_01162">
    <property type="entry name" value="Aas"/>
    <property type="match status" value="1"/>
</dbReference>
<dbReference type="InterPro" id="IPR023775">
    <property type="entry name" value="Aas"/>
</dbReference>
<dbReference type="InterPro" id="IPR045851">
    <property type="entry name" value="AMP-bd_C_sf"/>
</dbReference>
<dbReference type="InterPro" id="IPR020845">
    <property type="entry name" value="AMP-binding_CS"/>
</dbReference>
<dbReference type="InterPro" id="IPR000873">
    <property type="entry name" value="AMP-dep_synth/lig_dom"/>
</dbReference>
<dbReference type="InterPro" id="IPR042099">
    <property type="entry name" value="ANL_N_sf"/>
</dbReference>
<dbReference type="InterPro" id="IPR002123">
    <property type="entry name" value="Plipid/glycerol_acylTrfase"/>
</dbReference>
<dbReference type="NCBIfam" id="NF005959">
    <property type="entry name" value="PRK08043.1"/>
    <property type="match status" value="1"/>
</dbReference>
<dbReference type="PANTHER" id="PTHR43201">
    <property type="entry name" value="ACYL-COA SYNTHETASE"/>
    <property type="match status" value="1"/>
</dbReference>
<dbReference type="PANTHER" id="PTHR43201:SF8">
    <property type="entry name" value="ACYL-COA SYNTHETASE FAMILY MEMBER 3"/>
    <property type="match status" value="1"/>
</dbReference>
<dbReference type="Pfam" id="PF01553">
    <property type="entry name" value="Acyltransferase"/>
    <property type="match status" value="1"/>
</dbReference>
<dbReference type="Pfam" id="PF00501">
    <property type="entry name" value="AMP-binding"/>
    <property type="match status" value="1"/>
</dbReference>
<dbReference type="SMART" id="SM00563">
    <property type="entry name" value="PlsC"/>
    <property type="match status" value="1"/>
</dbReference>
<dbReference type="SUPFAM" id="SSF56801">
    <property type="entry name" value="Acetyl-CoA synthetase-like"/>
    <property type="match status" value="1"/>
</dbReference>
<dbReference type="SUPFAM" id="SSF69593">
    <property type="entry name" value="Glycerol-3-phosphate (1)-acyltransferase"/>
    <property type="match status" value="1"/>
</dbReference>
<dbReference type="PROSITE" id="PS00455">
    <property type="entry name" value="AMP_BINDING"/>
    <property type="match status" value="1"/>
</dbReference>
<accession>B4TGR5</accession>